<name>MBTK_MYCPA</name>
<protein>
    <recommendedName>
        <fullName>Lysine N-acyltransferase MbtK</fullName>
        <shortName>N-acyltransferase MbtK</shortName>
        <ecNumber>2.3.1.-</ecNumber>
    </recommendedName>
    <alternativeName>
        <fullName>Mycobactin synthase protein K</fullName>
    </alternativeName>
</protein>
<accession>Q73ZP9</accession>
<sequence length="221" mass="24906">MSDAPAESAPAQIDPAQTDPAEQPVQILPRERSDIPDAVARIPRPPVPHLDPPFALRVARLGDADMVAEWMNRPHLAAAWEYDWPTPRWRRHLGAQLQGSYSLPLIGSMRGVDLAYLELYWAAKDLISRYYDAEPYDLGLHAAIADVKLVNRGLGPMLLPRIVASVFATEPRCRRVMFDPDHRNTTARRLCEYAGCRFLGEHDTTNRRMALYALDAPTTDR</sequence>
<keyword id="KW-0012">Acyltransferase</keyword>
<keyword id="KW-1185">Reference proteome</keyword>
<keyword id="KW-0808">Transferase</keyword>
<feature type="chain" id="PRO_0000278302" description="Lysine N-acyltransferase MbtK">
    <location>
        <begin position="1"/>
        <end position="221"/>
    </location>
</feature>
<feature type="region of interest" description="Disordered" evidence="3">
    <location>
        <begin position="1"/>
        <end position="34"/>
    </location>
</feature>
<feature type="active site" description="Proton acceptor" evidence="2">
    <location>
        <position position="179"/>
    </location>
</feature>
<feature type="binding site" evidence="2">
    <location>
        <position position="141"/>
    </location>
    <ligand>
        <name>substrate</name>
    </ligand>
</feature>
<evidence type="ECO:0000250" key="1"/>
<evidence type="ECO:0000255" key="2"/>
<evidence type="ECO:0000256" key="3">
    <source>
        <dbReference type="SAM" id="MobiDB-lite"/>
    </source>
</evidence>
<evidence type="ECO:0000305" key="4"/>
<organism>
    <name type="scientific">Mycolicibacterium paratuberculosis (strain ATCC BAA-968 / K-10)</name>
    <name type="common">Mycobacterium paratuberculosis</name>
    <dbReference type="NCBI Taxonomy" id="262316"/>
    <lineage>
        <taxon>Bacteria</taxon>
        <taxon>Bacillati</taxon>
        <taxon>Actinomycetota</taxon>
        <taxon>Actinomycetes</taxon>
        <taxon>Mycobacteriales</taxon>
        <taxon>Mycobacteriaceae</taxon>
        <taxon>Mycobacterium</taxon>
        <taxon>Mycobacterium avium complex (MAC)</taxon>
    </lineage>
</organism>
<dbReference type="EC" id="2.3.1.-"/>
<dbReference type="EMBL" id="AE016958">
    <property type="protein sequence ID" value="AAS03869.1"/>
    <property type="status" value="ALT_FRAME"/>
    <property type="molecule type" value="Genomic_DNA"/>
</dbReference>
<dbReference type="SMR" id="Q73ZP9"/>
<dbReference type="STRING" id="262316.MAP_1552"/>
<dbReference type="KEGG" id="mpa:MAP_1552"/>
<dbReference type="eggNOG" id="COG1670">
    <property type="taxonomic scope" value="Bacteria"/>
</dbReference>
<dbReference type="HOGENOM" id="CLU_039848_6_0_11"/>
<dbReference type="UniPathway" id="UPA00011"/>
<dbReference type="Proteomes" id="UP000000580">
    <property type="component" value="Chromosome"/>
</dbReference>
<dbReference type="GO" id="GO:0016410">
    <property type="term" value="F:N-acyltransferase activity"/>
    <property type="evidence" value="ECO:0007669"/>
    <property type="project" value="TreeGrafter"/>
</dbReference>
<dbReference type="GO" id="GO:0019290">
    <property type="term" value="P:siderophore biosynthetic process"/>
    <property type="evidence" value="ECO:0007669"/>
    <property type="project" value="InterPro"/>
</dbReference>
<dbReference type="Gene3D" id="3.40.630.30">
    <property type="match status" value="1"/>
</dbReference>
<dbReference type="InterPro" id="IPR016181">
    <property type="entry name" value="Acyl_CoA_acyltransferase"/>
</dbReference>
<dbReference type="InterPro" id="IPR019432">
    <property type="entry name" value="Acyltransferase_MbtK/IucB-like"/>
</dbReference>
<dbReference type="PANTHER" id="PTHR31438">
    <property type="entry name" value="LYSINE N-ACYLTRANSFERASE C17G9.06C-RELATED"/>
    <property type="match status" value="1"/>
</dbReference>
<dbReference type="PANTHER" id="PTHR31438:SF1">
    <property type="entry name" value="LYSINE N-ACYLTRANSFERASE C17G9.06C-RELATED"/>
    <property type="match status" value="1"/>
</dbReference>
<dbReference type="Pfam" id="PF13523">
    <property type="entry name" value="Acetyltransf_8"/>
    <property type="match status" value="1"/>
</dbReference>
<dbReference type="SMART" id="SM01006">
    <property type="entry name" value="AlcB"/>
    <property type="match status" value="1"/>
</dbReference>
<dbReference type="SUPFAM" id="SSF55729">
    <property type="entry name" value="Acyl-CoA N-acyltransferases (Nat)"/>
    <property type="match status" value="1"/>
</dbReference>
<reference key="1">
    <citation type="journal article" date="2005" name="Proc. Natl. Acad. Sci. U.S.A.">
        <title>The complete genome sequence of Mycobacterium avium subspecies paratuberculosis.</title>
        <authorList>
            <person name="Li L."/>
            <person name="Bannantine J.P."/>
            <person name="Zhang Q."/>
            <person name="Amonsin A."/>
            <person name="May B.J."/>
            <person name="Alt D."/>
            <person name="Banerji N."/>
            <person name="Kanjilal S."/>
            <person name="Kapur V."/>
        </authorList>
    </citation>
    <scope>NUCLEOTIDE SEQUENCE [LARGE SCALE GENOMIC DNA]</scope>
    <source>
        <strain>ATCC BAA-968 / K-10</strain>
    </source>
</reference>
<comment type="function">
    <text evidence="1">Acyltransferase required for the direct transfer of medium- to long-chain fatty acyl moieties from a carrier protein (MbtL) on to the epsilon-amino group of lysine residue in the mycobactin core.</text>
</comment>
<comment type="pathway">
    <text>Siderophore biosynthesis; mycobactin biosynthesis.</text>
</comment>
<comment type="subunit">
    <text evidence="1">Monomer.</text>
</comment>
<comment type="similarity">
    <text evidence="4">Belongs to the lysine N-acyltransferase MbtK family.</text>
</comment>
<comment type="sequence caution" evidence="4">
    <conflict type="frameshift">
        <sequence resource="EMBL-CDS" id="AAS03869"/>
    </conflict>
</comment>
<proteinExistence type="inferred from homology"/>
<gene>
    <name type="primary">mbtK</name>
    <name type="ordered locus">MAP_1552</name>
</gene>